<dbReference type="EC" id="2.7.4.23" evidence="1"/>
<dbReference type="EMBL" id="CP002206">
    <property type="protein sequence ID" value="ADO10029.1"/>
    <property type="molecule type" value="Genomic_DNA"/>
</dbReference>
<dbReference type="RefSeq" id="WP_013358333.1">
    <property type="nucleotide sequence ID" value="NC_014562.1"/>
</dbReference>
<dbReference type="SMR" id="E1SHE4"/>
<dbReference type="KEGG" id="pva:Pvag_1844"/>
<dbReference type="eggNOG" id="COG3709">
    <property type="taxonomic scope" value="Bacteria"/>
</dbReference>
<dbReference type="HOGENOM" id="CLU_102477_0_0_6"/>
<dbReference type="OrthoDB" id="341217at2"/>
<dbReference type="UniPathway" id="UPA00087">
    <property type="reaction ID" value="UER00175"/>
</dbReference>
<dbReference type="GO" id="GO:0005829">
    <property type="term" value="C:cytosol"/>
    <property type="evidence" value="ECO:0007669"/>
    <property type="project" value="TreeGrafter"/>
</dbReference>
<dbReference type="GO" id="GO:0005524">
    <property type="term" value="F:ATP binding"/>
    <property type="evidence" value="ECO:0007669"/>
    <property type="project" value="UniProtKB-KW"/>
</dbReference>
<dbReference type="GO" id="GO:0033863">
    <property type="term" value="F:ribose 1,5-bisphosphate phosphokinase activity"/>
    <property type="evidence" value="ECO:0007669"/>
    <property type="project" value="UniProtKB-UniRule"/>
</dbReference>
<dbReference type="GO" id="GO:0006015">
    <property type="term" value="P:5-phosphoribose 1-diphosphate biosynthetic process"/>
    <property type="evidence" value="ECO:0007669"/>
    <property type="project" value="UniProtKB-UniRule"/>
</dbReference>
<dbReference type="GO" id="GO:0019634">
    <property type="term" value="P:organic phosphonate metabolic process"/>
    <property type="evidence" value="ECO:0007669"/>
    <property type="project" value="UniProtKB-UniRule"/>
</dbReference>
<dbReference type="FunFam" id="3.40.50.300:FF:000979">
    <property type="entry name" value="Ribose 1,5-bisphosphate phosphokinase PhnN"/>
    <property type="match status" value="1"/>
</dbReference>
<dbReference type="Gene3D" id="3.40.50.300">
    <property type="entry name" value="P-loop containing nucleotide triphosphate hydrolases"/>
    <property type="match status" value="1"/>
</dbReference>
<dbReference type="HAMAP" id="MF_00836">
    <property type="entry name" value="PhnN"/>
    <property type="match status" value="1"/>
</dbReference>
<dbReference type="InterPro" id="IPR008145">
    <property type="entry name" value="GK/Ca_channel_bsu"/>
</dbReference>
<dbReference type="InterPro" id="IPR027417">
    <property type="entry name" value="P-loop_NTPase"/>
</dbReference>
<dbReference type="InterPro" id="IPR012699">
    <property type="entry name" value="PhnN"/>
</dbReference>
<dbReference type="NCBIfam" id="TIGR02322">
    <property type="entry name" value="phosphon_PhnN"/>
    <property type="match status" value="1"/>
</dbReference>
<dbReference type="NCBIfam" id="NF007485">
    <property type="entry name" value="PRK10078.1"/>
    <property type="match status" value="1"/>
</dbReference>
<dbReference type="PANTHER" id="PTHR23117">
    <property type="entry name" value="GUANYLATE KINASE-RELATED"/>
    <property type="match status" value="1"/>
</dbReference>
<dbReference type="PANTHER" id="PTHR23117:SF8">
    <property type="entry name" value="RIBOSE 1,5-BISPHOSPHATE PHOSPHOKINASE PHNN"/>
    <property type="match status" value="1"/>
</dbReference>
<dbReference type="Pfam" id="PF13238">
    <property type="entry name" value="AAA_18"/>
    <property type="match status" value="1"/>
</dbReference>
<dbReference type="SMART" id="SM00072">
    <property type="entry name" value="GuKc"/>
    <property type="match status" value="1"/>
</dbReference>
<dbReference type="SUPFAM" id="SSF52540">
    <property type="entry name" value="P-loop containing nucleoside triphosphate hydrolases"/>
    <property type="match status" value="1"/>
</dbReference>
<reference key="1">
    <citation type="journal article" date="2010" name="J. Bacteriol.">
        <title>The genome sequence of the biocontrol agent Pantoea vagans strain C9-1.</title>
        <authorList>
            <person name="Smits T.H."/>
            <person name="Rezzonico F."/>
            <person name="Kamber T."/>
            <person name="Goesmann A."/>
            <person name="Ishimaru C.A."/>
            <person name="Stockwell V.O."/>
            <person name="Frey J.E."/>
            <person name="Duffy B."/>
        </authorList>
    </citation>
    <scope>NUCLEOTIDE SEQUENCE [LARGE SCALE GENOMIC DNA]</scope>
    <source>
        <strain>C9-1</strain>
    </source>
</reference>
<feature type="chain" id="PRO_0000412792" description="Ribose 1,5-bisphosphate phosphokinase PhnN">
    <location>
        <begin position="1"/>
        <end position="178"/>
    </location>
</feature>
<feature type="binding site" evidence="1">
    <location>
        <begin position="9"/>
        <end position="16"/>
    </location>
    <ligand>
        <name>ATP</name>
        <dbReference type="ChEBI" id="CHEBI:30616"/>
    </ligand>
</feature>
<proteinExistence type="inferred from homology"/>
<name>PHNN_PANVC</name>
<accession>E1SHE4</accession>
<organism>
    <name type="scientific">Pantoea vagans (strain C9-1)</name>
    <name type="common">Pantoea agglomerans (strain C9-1)</name>
    <dbReference type="NCBI Taxonomy" id="712898"/>
    <lineage>
        <taxon>Bacteria</taxon>
        <taxon>Pseudomonadati</taxon>
        <taxon>Pseudomonadota</taxon>
        <taxon>Gammaproteobacteria</taxon>
        <taxon>Enterobacterales</taxon>
        <taxon>Erwiniaceae</taxon>
        <taxon>Pantoea</taxon>
    </lineage>
</organism>
<keyword id="KW-0067">ATP-binding</keyword>
<keyword id="KW-0547">Nucleotide-binding</keyword>
<keyword id="KW-0808">Transferase</keyword>
<gene>
    <name evidence="1" type="primary">phnN</name>
    <name type="ordered locus">Pvag_1844</name>
</gene>
<evidence type="ECO:0000255" key="1">
    <source>
        <dbReference type="HAMAP-Rule" id="MF_00836"/>
    </source>
</evidence>
<protein>
    <recommendedName>
        <fullName evidence="1">Ribose 1,5-bisphosphate phosphokinase PhnN</fullName>
        <ecNumber evidence="1">2.7.4.23</ecNumber>
    </recommendedName>
    <alternativeName>
        <fullName evidence="1">Ribose 1,5-bisphosphokinase</fullName>
    </alternativeName>
</protein>
<comment type="function">
    <text evidence="1">Catalyzes the phosphorylation of ribose 1,5-bisphosphate to 5-phospho-D-ribosyl alpha-1-diphosphate (PRPP).</text>
</comment>
<comment type="catalytic activity">
    <reaction evidence="1">
        <text>alpha-D-ribose 1,5-bisphosphate + ATP = 5-phospho-alpha-D-ribose 1-diphosphate + ADP</text>
        <dbReference type="Rhea" id="RHEA:20109"/>
        <dbReference type="ChEBI" id="CHEBI:30616"/>
        <dbReference type="ChEBI" id="CHEBI:58017"/>
        <dbReference type="ChEBI" id="CHEBI:68688"/>
        <dbReference type="ChEBI" id="CHEBI:456216"/>
        <dbReference type="EC" id="2.7.4.23"/>
    </reaction>
</comment>
<comment type="pathway">
    <text evidence="1">Metabolic intermediate biosynthesis; 5-phospho-alpha-D-ribose 1-diphosphate biosynthesis; 5-phospho-alpha-D-ribose 1-diphosphate from D-ribose 5-phosphate (route II): step 3/3.</text>
</comment>
<comment type="similarity">
    <text evidence="1">Belongs to the ribose 1,5-bisphosphokinase family.</text>
</comment>
<sequence length="178" mass="19488">MARLIWLTGPSGSGKDSLLDALRAAPPPRLLIAHRYITRAADAGGENHVALTETEFDRRAALGLFAVSWEAHGFRYGIGCETEQWLLRGQNVVVNGSRLHLAQAQARFGSQLLPVCLQVTPAVLAARLRQRGREDEAEIARRLARAAQPQPDGCLILNNDGALAETVCQLRQILELHQ</sequence>